<comment type="function">
    <text evidence="1">Component of the nexin-dynein regulatory complex (N-DRC) a key regulator of ciliary/flagellar motility which maintains the alignment and integrity of the distal axoneme and regulates microtubule sliding in motile axonemes.</text>
</comment>
<comment type="subunit">
    <text evidence="1 2 3">Component of the nexin-dynein regulatory complex (N-DRC). Interacts with DRC1 (By similarity). Interacts with TCTE1/DRC5 (By similarity). Interacts with DRC7 (By similarity).</text>
</comment>
<comment type="subcellular location">
    <subcellularLocation>
        <location evidence="3">Cytoplasm</location>
        <location evidence="3">Cytoskeleton</location>
        <location evidence="3">Cilium axoneme</location>
    </subcellularLocation>
    <subcellularLocation>
        <location evidence="3">Cell projection</location>
        <location evidence="3">Cilium</location>
    </subcellularLocation>
    <subcellularLocation>
        <location evidence="1">Cytoplasm</location>
        <location evidence="1">Cytoskeleton</location>
        <location evidence="1">Flagellum axoneme</location>
    </subcellularLocation>
    <subcellularLocation>
        <location evidence="2">Cell projection</location>
        <location evidence="2">Cilium</location>
        <location evidence="2">Flagellum</location>
    </subcellularLocation>
</comment>
<comment type="similarity">
    <text evidence="5">Belongs to the DRC3 family.</text>
</comment>
<evidence type="ECO:0000250" key="1">
    <source>
        <dbReference type="UniProtKB" id="A8IVX2"/>
    </source>
</evidence>
<evidence type="ECO:0000250" key="2">
    <source>
        <dbReference type="UniProtKB" id="Q9D5E4"/>
    </source>
</evidence>
<evidence type="ECO:0000250" key="3">
    <source>
        <dbReference type="UniProtKB" id="Q9H069"/>
    </source>
</evidence>
<evidence type="ECO:0000255" key="4"/>
<evidence type="ECO:0000305" key="5"/>
<keyword id="KW-0966">Cell projection</keyword>
<keyword id="KW-0969">Cilium</keyword>
<keyword id="KW-0175">Coiled coil</keyword>
<keyword id="KW-0963">Cytoplasm</keyword>
<keyword id="KW-0206">Cytoskeleton</keyword>
<keyword id="KW-0282">Flagellum</keyword>
<keyword id="KW-0433">Leucine-rich repeat</keyword>
<keyword id="KW-1185">Reference proteome</keyword>
<keyword id="KW-0677">Repeat</keyword>
<sequence>MNRLCDSMEPKVMDDDMLKLAVGEQGPQEEAGQLAKQEGILFKDVLSLQLDFRNILRIDNLWQFENLRKLQLDNNIIEKIGGLENLTHLVWLDLSFNNIETIEGLDTLVNLEDLSLFNNRISKIDSLDALVKLQVLSLGNNQIDNMMNIVYLRRFQCLRTLSLSGNPISEAEDYKMFICAYLPDLVYLDFRRIDDHTKELAEAKHQYSIDELKHRENLMQVRLQDERARQEELEKHKTAFVEHLNGSFLFDSMYAEDSEGNKLSYLPGVSELLEAYKDKFVIICMNIFEYGLKQQEKRKIELDTFSECVHEAIQENQEQGKRKIAQFEEKHLSSLSAIREESELPNIEKMILECSADVSELFNELMMLEMQLVEQLEETINMFERNIVDMVGLFIENVQSLMAQCRDLENHHHEKLLEISISTLEKIVKGDLDEDLPDDLRALFVDKDTIVNAVGASHDIHLLKIDNREDELVTRINSWCTRLVDKIHKDEIMRNRKRVKEINQYIDHMQSELDNLEYSDILD</sequence>
<name>DRC3_MACFA</name>
<organism>
    <name type="scientific">Macaca fascicularis</name>
    <name type="common">Crab-eating macaque</name>
    <name type="synonym">Cynomolgus monkey</name>
    <dbReference type="NCBI Taxonomy" id="9541"/>
    <lineage>
        <taxon>Eukaryota</taxon>
        <taxon>Metazoa</taxon>
        <taxon>Chordata</taxon>
        <taxon>Craniata</taxon>
        <taxon>Vertebrata</taxon>
        <taxon>Euteleostomi</taxon>
        <taxon>Mammalia</taxon>
        <taxon>Eutheria</taxon>
        <taxon>Euarchontoglires</taxon>
        <taxon>Primates</taxon>
        <taxon>Haplorrhini</taxon>
        <taxon>Catarrhini</taxon>
        <taxon>Cercopithecidae</taxon>
        <taxon>Cercopithecinae</taxon>
        <taxon>Macaca</taxon>
    </lineage>
</organism>
<dbReference type="EMBL" id="AB169051">
    <property type="protein sequence ID" value="BAE01145.1"/>
    <property type="molecule type" value="mRNA"/>
</dbReference>
<dbReference type="RefSeq" id="NP_001306335.1">
    <property type="nucleotide sequence ID" value="NM_001319406.1"/>
</dbReference>
<dbReference type="SMR" id="Q4R6X9"/>
<dbReference type="STRING" id="9541.ENSMFAP00000015017"/>
<dbReference type="Proteomes" id="UP000233100">
    <property type="component" value="Unplaced"/>
</dbReference>
<dbReference type="GO" id="GO:0005737">
    <property type="term" value="C:cytoplasm"/>
    <property type="evidence" value="ECO:0007669"/>
    <property type="project" value="UniProtKB-KW"/>
</dbReference>
<dbReference type="GO" id="GO:0005856">
    <property type="term" value="C:cytoskeleton"/>
    <property type="evidence" value="ECO:0007669"/>
    <property type="project" value="UniProtKB-KW"/>
</dbReference>
<dbReference type="GO" id="GO:0036126">
    <property type="term" value="C:sperm flagellum"/>
    <property type="evidence" value="ECO:0000250"/>
    <property type="project" value="UniProtKB"/>
</dbReference>
<dbReference type="FunFam" id="3.80.10.10:FF:000292">
    <property type="entry name" value="Dynein regulatory complex subunit 3"/>
    <property type="match status" value="1"/>
</dbReference>
<dbReference type="Gene3D" id="3.80.10.10">
    <property type="entry name" value="Ribonuclease Inhibitor"/>
    <property type="match status" value="1"/>
</dbReference>
<dbReference type="InterPro" id="IPR050576">
    <property type="entry name" value="Cilia_flagella_integrity"/>
</dbReference>
<dbReference type="InterPro" id="IPR001611">
    <property type="entry name" value="Leu-rich_rpt"/>
</dbReference>
<dbReference type="InterPro" id="IPR032675">
    <property type="entry name" value="LRR_dom_sf"/>
</dbReference>
<dbReference type="PANTHER" id="PTHR45973:SF12">
    <property type="entry name" value="DYNEIN REGULATORY COMPLEX SUBUNIT 3"/>
    <property type="match status" value="1"/>
</dbReference>
<dbReference type="PANTHER" id="PTHR45973">
    <property type="entry name" value="PROTEIN PHOSPHATASE 1 REGULATORY SUBUNIT SDS22-RELATED"/>
    <property type="match status" value="1"/>
</dbReference>
<dbReference type="Pfam" id="PF14580">
    <property type="entry name" value="LRR_9"/>
    <property type="match status" value="1"/>
</dbReference>
<dbReference type="SMART" id="SM00365">
    <property type="entry name" value="LRR_SD22"/>
    <property type="match status" value="4"/>
</dbReference>
<dbReference type="SUPFAM" id="SSF52058">
    <property type="entry name" value="L domain-like"/>
    <property type="match status" value="1"/>
</dbReference>
<dbReference type="PROSITE" id="PS51450">
    <property type="entry name" value="LRR"/>
    <property type="match status" value="5"/>
</dbReference>
<protein>
    <recommendedName>
        <fullName>Dynein regulatory complex subunit 3</fullName>
    </recommendedName>
    <alternativeName>
        <fullName>Leucine-rich repeat-containing protein 48</fullName>
    </alternativeName>
</protein>
<proteinExistence type="evidence at transcript level"/>
<gene>
    <name type="primary">DRC3</name>
    <name type="synonym">LRRC48</name>
    <name type="ORF">QtsA-16881</name>
</gene>
<feature type="chain" id="PRO_0000227775" description="Dynein regulatory complex subunit 3">
    <location>
        <begin position="1"/>
        <end position="523"/>
    </location>
</feature>
<feature type="repeat" description="LRR 1">
    <location>
        <begin position="44"/>
        <end position="65"/>
    </location>
</feature>
<feature type="repeat" description="LRR 2">
    <location>
        <begin position="66"/>
        <end position="87"/>
    </location>
</feature>
<feature type="repeat" description="LRR 3">
    <location>
        <begin position="88"/>
        <end position="109"/>
    </location>
</feature>
<feature type="repeat" description="LRR 4">
    <location>
        <begin position="110"/>
        <end position="131"/>
    </location>
</feature>
<feature type="repeat" description="LRR 5">
    <location>
        <begin position="132"/>
        <end position="153"/>
    </location>
</feature>
<feature type="domain" description="LRRCT">
    <location>
        <begin position="166"/>
        <end position="206"/>
    </location>
</feature>
<feature type="coiled-coil region" evidence="4">
    <location>
        <begin position="358"/>
        <end position="391"/>
    </location>
</feature>
<accession>Q4R6X9</accession>
<reference key="1">
    <citation type="submission" date="2005-06" db="EMBL/GenBank/DDBJ databases">
        <title>DNA sequences of macaque genes expressed in brain or testis and its evolutionary implications.</title>
        <authorList>
            <consortium name="International consortium for macaque cDNA sequencing and analysis"/>
        </authorList>
    </citation>
    <scope>NUCLEOTIDE SEQUENCE [LARGE SCALE MRNA]</scope>
    <source>
        <tissue>Testis</tissue>
    </source>
</reference>